<accession>P04454</accession>
<accession>O82994</accession>
<keyword id="KW-0903">Direct protein sequencing</keyword>
<keyword id="KW-0687">Ribonucleoprotein</keyword>
<keyword id="KW-0689">Ribosomal protein</keyword>
<keyword id="KW-0694">RNA-binding</keyword>
<keyword id="KW-0699">rRNA-binding</keyword>
<comment type="function">
    <text evidence="2">One of the early assembly proteins it binds 23S rRNA. One of the proteins that surrounds the polypeptide exit tunnel on the outside of the ribosome. Forms the main docking site for trigger factor binding to the ribosome.</text>
</comment>
<comment type="subunit">
    <text evidence="1">Contacts protein L29, and trigger factor when it is bound to the ribosome (By similarity). Part of the 50S ribosomal subunit.</text>
</comment>
<comment type="similarity">
    <text evidence="2">Belongs to the universal ribosomal protein uL23 family.</text>
</comment>
<proteinExistence type="evidence at protein level"/>
<dbReference type="EMBL" id="AB015722">
    <property type="protein sequence ID" value="BAA31209.1"/>
    <property type="molecule type" value="Genomic_DNA"/>
</dbReference>
<dbReference type="PIR" id="A02815">
    <property type="entry name" value="R5BS23"/>
</dbReference>
<dbReference type="SMR" id="P04454"/>
<dbReference type="GO" id="GO:1990904">
    <property type="term" value="C:ribonucleoprotein complex"/>
    <property type="evidence" value="ECO:0007669"/>
    <property type="project" value="UniProtKB-KW"/>
</dbReference>
<dbReference type="GO" id="GO:0005840">
    <property type="term" value="C:ribosome"/>
    <property type="evidence" value="ECO:0007669"/>
    <property type="project" value="UniProtKB-KW"/>
</dbReference>
<dbReference type="GO" id="GO:0019843">
    <property type="term" value="F:rRNA binding"/>
    <property type="evidence" value="ECO:0007669"/>
    <property type="project" value="UniProtKB-UniRule"/>
</dbReference>
<dbReference type="GO" id="GO:0003735">
    <property type="term" value="F:structural constituent of ribosome"/>
    <property type="evidence" value="ECO:0007669"/>
    <property type="project" value="InterPro"/>
</dbReference>
<dbReference type="GO" id="GO:0006412">
    <property type="term" value="P:translation"/>
    <property type="evidence" value="ECO:0007669"/>
    <property type="project" value="UniProtKB-UniRule"/>
</dbReference>
<dbReference type="FunFam" id="3.30.70.330:FF:000001">
    <property type="entry name" value="50S ribosomal protein L23"/>
    <property type="match status" value="1"/>
</dbReference>
<dbReference type="Gene3D" id="3.30.70.330">
    <property type="match status" value="1"/>
</dbReference>
<dbReference type="HAMAP" id="MF_01369_B">
    <property type="entry name" value="Ribosomal_uL23_B"/>
    <property type="match status" value="1"/>
</dbReference>
<dbReference type="InterPro" id="IPR012677">
    <property type="entry name" value="Nucleotide-bd_a/b_plait_sf"/>
</dbReference>
<dbReference type="InterPro" id="IPR013025">
    <property type="entry name" value="Ribosomal_uL23-like"/>
</dbReference>
<dbReference type="InterPro" id="IPR012678">
    <property type="entry name" value="Ribosomal_uL23/eL15/eS24_sf"/>
</dbReference>
<dbReference type="InterPro" id="IPR001014">
    <property type="entry name" value="Ribosomal_uL23_CS"/>
</dbReference>
<dbReference type="NCBIfam" id="NF004363">
    <property type="entry name" value="PRK05738.2-4"/>
    <property type="match status" value="1"/>
</dbReference>
<dbReference type="PANTHER" id="PTHR11620">
    <property type="entry name" value="60S RIBOSOMAL PROTEIN L23A"/>
    <property type="match status" value="1"/>
</dbReference>
<dbReference type="Pfam" id="PF00276">
    <property type="entry name" value="Ribosomal_L23"/>
    <property type="match status" value="1"/>
</dbReference>
<dbReference type="SUPFAM" id="SSF54189">
    <property type="entry name" value="Ribosomal proteins S24e, L23 and L15e"/>
    <property type="match status" value="1"/>
</dbReference>
<dbReference type="PROSITE" id="PS00050">
    <property type="entry name" value="RIBOSOMAL_L23"/>
    <property type="match status" value="1"/>
</dbReference>
<protein>
    <recommendedName>
        <fullName evidence="2">Large ribosomal subunit protein uL23</fullName>
    </recommendedName>
    <alternativeName>
        <fullName evidence="3">50S ribosomal protein L23</fullName>
    </alternativeName>
</protein>
<gene>
    <name evidence="2" type="primary">rplW</name>
</gene>
<sequence>MKDPRDIIKRPIITENTMNLIGQKKYTFEVDVKANKTEVKDAVEKIFGVKVEKVNIMNYKGKFKRVGRYSGYTNRRKKAIVTLTPDSKEIELFEV</sequence>
<reference key="1">
    <citation type="journal article" date="1985" name="Eur. J. Biochem.">
        <title>The complete primary structure of ribosomal proteins L1, L14, L15, L23, L24 and L29 from Bacillus stearothermophilus.</title>
        <authorList>
            <person name="Kimura M."/>
            <person name="Kimura J."/>
            <person name="Ashman K."/>
        </authorList>
    </citation>
    <scope>PROTEIN SEQUENCE</scope>
</reference>
<reference key="2">
    <citation type="submission" date="1998-06" db="EMBL/GenBank/DDBJ databases">
        <title>Nucleotide sequence of the genes encoding the ribosomal proteins L23 and L2 from the Bacillus stearothermophilus ribosome.</title>
        <authorList>
            <person name="Kimura M."/>
        </authorList>
    </citation>
    <scope>NUCLEOTIDE SEQUENCE [GENOMIC DNA]</scope>
</reference>
<evidence type="ECO:0000250" key="1"/>
<evidence type="ECO:0000255" key="2">
    <source>
        <dbReference type="HAMAP-Rule" id="MF_01369"/>
    </source>
</evidence>
<evidence type="ECO:0000305" key="3"/>
<name>RL23_GEOSE</name>
<organism>
    <name type="scientific">Geobacillus stearothermophilus</name>
    <name type="common">Bacillus stearothermophilus</name>
    <dbReference type="NCBI Taxonomy" id="1422"/>
    <lineage>
        <taxon>Bacteria</taxon>
        <taxon>Bacillati</taxon>
        <taxon>Bacillota</taxon>
        <taxon>Bacilli</taxon>
        <taxon>Bacillales</taxon>
        <taxon>Anoxybacillaceae</taxon>
        <taxon>Geobacillus</taxon>
    </lineage>
</organism>
<feature type="chain" id="PRO_0000129397" description="Large ribosomal subunit protein uL23">
    <location>
        <begin position="1"/>
        <end position="95"/>
    </location>
</feature>
<feature type="sequence conflict" description="In Ref. 2; BAA31209." evidence="3" ref="2">
    <original>E</original>
    <variation>A</variation>
    <location>
        <position position="52"/>
    </location>
</feature>
<feature type="sequence conflict" description="In Ref. 2; BAA31209." evidence="3" ref="2">
    <original>K</original>
    <variation>R</variation>
    <location>
        <position position="77"/>
    </location>
</feature>